<sequence>MSTVYHRPADPSGDDSYVRPLFADRCQAGFPSPATDYAEQELDLNSYCISRPAATFFLRASGESMNQAGVQNGDLLVVDRAEKPQHGDIVIAEIDGEFTVKRLLLRPRPALEPVSDSPEFRTLYPENICIFGVVTHVIHRTRELR</sequence>
<feature type="chain" id="PRO_0000252112" description="Protein ImpA">
    <location>
        <begin position="1"/>
        <end position="145"/>
    </location>
</feature>
<feature type="chain" id="PRO_0000252113" description="Protein ImpA'" evidence="1">
    <location>
        <begin position="29"/>
        <end position="145"/>
    </location>
</feature>
<feature type="active site" description="For autocatalytic cleavage activity" evidence="2">
    <location>
        <position position="64"/>
    </location>
</feature>
<feature type="active site" description="For autocatalytic cleavage activity" evidence="2">
    <location>
        <position position="101"/>
    </location>
</feature>
<feature type="site" description="Cleavage; by autolysis" evidence="1">
    <location>
        <begin position="28"/>
        <end position="29"/>
    </location>
</feature>
<dbReference type="EC" id="3.4.21.-"/>
<dbReference type="EMBL" id="AB021078">
    <property type="protein sequence ID" value="BAA75114.1"/>
    <property type="molecule type" value="Genomic_DNA"/>
</dbReference>
<dbReference type="PIR" id="A36069">
    <property type="entry name" value="A36069"/>
</dbReference>
<dbReference type="RefSeq" id="WP_000109071.1">
    <property type="nucleotide sequence ID" value="NZ_WVVQ01000037.1"/>
</dbReference>
<dbReference type="RefSeq" id="YP_002756645.1">
    <property type="nucleotide sequence ID" value="NC_012487.1"/>
</dbReference>
<dbReference type="RefSeq" id="YP_003108104.1">
    <property type="nucleotide sequence ID" value="NC_013120.1"/>
</dbReference>
<dbReference type="RefSeq" id="YP_004119773.1">
    <property type="nucleotide sequence ID" value="NC_014843.1"/>
</dbReference>
<dbReference type="RefSeq" id="YP_006940046.1">
    <property type="nucleotide sequence ID" value="NC_018995.1"/>
</dbReference>
<dbReference type="RefSeq" id="YP_006952317.1">
    <property type="nucleotide sequence ID" value="NC_019061.1"/>
</dbReference>
<dbReference type="RefSeq" id="YP_006954375.1">
    <property type="nucleotide sequence ID" value="NC_019097.1"/>
</dbReference>
<dbReference type="RefSeq" id="YP_008826374.1">
    <property type="nucleotide sequence ID" value="NC_022885.1"/>
</dbReference>
<dbReference type="RefSeq" id="YP_008998745.1">
    <property type="nucleotide sequence ID" value="NC_023329.1"/>
</dbReference>
<dbReference type="RefSeq" id="YP_009060006.1">
    <property type="nucleotide sequence ID" value="NC_024955.2"/>
</dbReference>
<dbReference type="RefSeq" id="YP_009061218.1">
    <property type="nucleotide sequence ID" value="NC_024976.1"/>
</dbReference>
<dbReference type="RefSeq" id="YP_009061320.1">
    <property type="nucleotide sequence ID" value="NC_024977.1"/>
</dbReference>
<dbReference type="RefSeq" id="YP_009061451.1">
    <property type="nucleotide sequence ID" value="NC_024978.1"/>
</dbReference>
<dbReference type="RefSeq" id="YP_009061578.1">
    <property type="nucleotide sequence ID" value="NC_024979.1"/>
</dbReference>
<dbReference type="RefSeq" id="YP_009061709.1">
    <property type="nucleotide sequence ID" value="NC_024980.1"/>
</dbReference>
<dbReference type="RefSeq" id="YP_009068480.1">
    <property type="nucleotide sequence ID" value="NC_025140.1"/>
</dbReference>
<dbReference type="RefSeq" id="YP_009068769.1">
    <property type="nucleotide sequence ID" value="NC_025142.1"/>
</dbReference>
<dbReference type="RefSeq" id="YP_009068963.1">
    <property type="nucleotide sequence ID" value="NC_025143.1"/>
</dbReference>
<dbReference type="RefSeq" id="YP_009069084.1">
    <property type="nucleotide sequence ID" value="NC_025144.1"/>
</dbReference>
<dbReference type="RefSeq" id="YP_009069609.1">
    <property type="nucleotide sequence ID" value="NC_025147.1"/>
</dbReference>
<dbReference type="RefSeq" id="YP_009071358.1">
    <property type="nucleotide sequence ID" value="NC_025180.1"/>
</dbReference>
<dbReference type="RefSeq" id="YP_009328622.1">
    <property type="nucleotide sequence ID" value="NC_032100.1"/>
</dbReference>
<dbReference type="RefSeq" id="YP_190180.1">
    <property type="nucleotide sequence ID" value="NC_006671.1"/>
</dbReference>
<dbReference type="SMR" id="Q7M1C0"/>
<dbReference type="MEROPS" id="S24.003"/>
<dbReference type="GeneID" id="75206506"/>
<dbReference type="OMA" id="HETARNG"/>
<dbReference type="GO" id="GO:0003677">
    <property type="term" value="F:DNA binding"/>
    <property type="evidence" value="ECO:0007669"/>
    <property type="project" value="InterPro"/>
</dbReference>
<dbReference type="GO" id="GO:0008236">
    <property type="term" value="F:serine-type peptidase activity"/>
    <property type="evidence" value="ECO:0007669"/>
    <property type="project" value="UniProtKB-KW"/>
</dbReference>
<dbReference type="GO" id="GO:0006281">
    <property type="term" value="P:DNA repair"/>
    <property type="evidence" value="ECO:0007669"/>
    <property type="project" value="UniProtKB-KW"/>
</dbReference>
<dbReference type="GO" id="GO:0006508">
    <property type="term" value="P:proteolysis"/>
    <property type="evidence" value="ECO:0007669"/>
    <property type="project" value="UniProtKB-KW"/>
</dbReference>
<dbReference type="GO" id="GO:0006355">
    <property type="term" value="P:regulation of DNA-templated transcription"/>
    <property type="evidence" value="ECO:0007669"/>
    <property type="project" value="InterPro"/>
</dbReference>
<dbReference type="GO" id="GO:0009432">
    <property type="term" value="P:SOS response"/>
    <property type="evidence" value="ECO:0007669"/>
    <property type="project" value="UniProtKB-KW"/>
</dbReference>
<dbReference type="CDD" id="cd06529">
    <property type="entry name" value="S24_LexA-like"/>
    <property type="match status" value="1"/>
</dbReference>
<dbReference type="Gene3D" id="2.10.109.10">
    <property type="entry name" value="Umud Fragment, subunit A"/>
    <property type="match status" value="1"/>
</dbReference>
<dbReference type="InterPro" id="IPR039418">
    <property type="entry name" value="LexA-like"/>
</dbReference>
<dbReference type="InterPro" id="IPR036286">
    <property type="entry name" value="LexA/Signal_pep-like_sf"/>
</dbReference>
<dbReference type="InterPro" id="IPR050077">
    <property type="entry name" value="LexA_repressor"/>
</dbReference>
<dbReference type="InterPro" id="IPR006197">
    <property type="entry name" value="Peptidase_S24_LexA"/>
</dbReference>
<dbReference type="InterPro" id="IPR015927">
    <property type="entry name" value="Peptidase_S24_S26A/B/C"/>
</dbReference>
<dbReference type="NCBIfam" id="NF007621">
    <property type="entry name" value="PRK10276.1"/>
    <property type="match status" value="1"/>
</dbReference>
<dbReference type="PANTHER" id="PTHR33516">
    <property type="entry name" value="LEXA REPRESSOR"/>
    <property type="match status" value="1"/>
</dbReference>
<dbReference type="PANTHER" id="PTHR33516:SF2">
    <property type="entry name" value="LEXA REPRESSOR-RELATED"/>
    <property type="match status" value="1"/>
</dbReference>
<dbReference type="Pfam" id="PF00717">
    <property type="entry name" value="Peptidase_S24"/>
    <property type="match status" value="1"/>
</dbReference>
<dbReference type="PRINTS" id="PR00726">
    <property type="entry name" value="LEXASERPTASE"/>
</dbReference>
<dbReference type="SUPFAM" id="SSF51306">
    <property type="entry name" value="LexA/Signal peptidase"/>
    <property type="match status" value="1"/>
</dbReference>
<geneLocation type="plasmid">
    <name>IncI1 ColIb-P9</name>
</geneLocation>
<name>IMPA_ECOLX</name>
<protein>
    <recommendedName>
        <fullName>Protein ImpA</fullName>
        <ecNumber>3.4.21.-</ecNumber>
    </recommendedName>
    <component>
        <recommendedName>
            <fullName>Protein ImpA'</fullName>
        </recommendedName>
    </component>
</protein>
<organism>
    <name type="scientific">Escherichia coli</name>
    <dbReference type="NCBI Taxonomy" id="562"/>
    <lineage>
        <taxon>Bacteria</taxon>
        <taxon>Pseudomonadati</taxon>
        <taxon>Pseudomonadota</taxon>
        <taxon>Gammaproteobacteria</taxon>
        <taxon>Enterobacterales</taxon>
        <taxon>Enterobacteriaceae</taxon>
        <taxon>Escherichia</taxon>
    </lineage>
</organism>
<accession>Q7M1C0</accession>
<accession>Q7DJY8</accession>
<evidence type="ECO:0000250" key="1"/>
<evidence type="ECO:0000250" key="2">
    <source>
        <dbReference type="UniProtKB" id="P0AG11"/>
    </source>
</evidence>
<evidence type="ECO:0000255" key="3"/>
<proteinExistence type="inferred from homology"/>
<reference key="1">
    <citation type="submission" date="1998-12" db="EMBL/GenBank/DDBJ databases">
        <title>Organization and diversification of plasmid genomes: complete nucleotide sequence of the ColIb-P9 genome.</title>
        <authorList>
            <person name="Sampei G."/>
            <person name="Mizobuchi K."/>
        </authorList>
    </citation>
    <scope>NUCLEOTIDE SEQUENCE [GENOMIC DNA]</scope>
</reference>
<keyword id="KW-0068">Autocatalytic cleavage</keyword>
<keyword id="KW-0227">DNA damage</keyword>
<keyword id="KW-0234">DNA repair</keyword>
<keyword id="KW-0378">Hydrolase</keyword>
<keyword id="KW-0614">Plasmid</keyword>
<keyword id="KW-0645">Protease</keyword>
<keyword id="KW-0720">Serine protease</keyword>
<keyword id="KW-0741">SOS mutagenesis</keyword>
<keyword id="KW-0742">SOS response</keyword>
<comment type="function">
    <text evidence="2">Involved in UV protection and mutation.</text>
</comment>
<comment type="similarity">
    <text evidence="3">Belongs to the peptidase S24 family.</text>
</comment>